<accession>Q9HVA4</accession>
<dbReference type="EC" id="1.8.5.-" evidence="1"/>
<dbReference type="EMBL" id="AE004091">
    <property type="protein sequence ID" value="AAG08078.1"/>
    <property type="molecule type" value="Genomic_DNA"/>
</dbReference>
<dbReference type="PIR" id="C83059">
    <property type="entry name" value="C83059"/>
</dbReference>
<dbReference type="RefSeq" id="NP_253380.1">
    <property type="nucleotide sequence ID" value="NC_002516.2"/>
</dbReference>
<dbReference type="RefSeq" id="WP_003113450.1">
    <property type="nucleotide sequence ID" value="NZ_QZGE01000018.1"/>
</dbReference>
<dbReference type="SMR" id="Q9HVA4"/>
<dbReference type="FunCoup" id="Q9HVA4">
    <property type="interactions" value="76"/>
</dbReference>
<dbReference type="STRING" id="208964.PA4692"/>
<dbReference type="PaxDb" id="208964-PA4692"/>
<dbReference type="GeneID" id="881475"/>
<dbReference type="KEGG" id="pae:PA4692"/>
<dbReference type="PATRIC" id="fig|208964.12.peg.4915"/>
<dbReference type="PseudoCAP" id="PA4692"/>
<dbReference type="HOGENOM" id="CLU_045520_0_0_6"/>
<dbReference type="InParanoid" id="Q9HVA4"/>
<dbReference type="OrthoDB" id="9795587at2"/>
<dbReference type="PhylomeDB" id="Q9HVA4"/>
<dbReference type="BioCyc" id="PAER208964:G1FZ6-4796-MONOMER"/>
<dbReference type="Proteomes" id="UP000002438">
    <property type="component" value="Chromosome"/>
</dbReference>
<dbReference type="GO" id="GO:0042597">
    <property type="term" value="C:periplasmic space"/>
    <property type="evidence" value="ECO:0007669"/>
    <property type="project" value="UniProtKB-SubCell"/>
</dbReference>
<dbReference type="GO" id="GO:0046872">
    <property type="term" value="F:metal ion binding"/>
    <property type="evidence" value="ECO:0007669"/>
    <property type="project" value="UniProtKB-KW"/>
</dbReference>
<dbReference type="GO" id="GO:0043546">
    <property type="term" value="F:molybdopterin cofactor binding"/>
    <property type="evidence" value="ECO:0007669"/>
    <property type="project" value="UniProtKB-UniRule"/>
</dbReference>
<dbReference type="GO" id="GO:0016672">
    <property type="term" value="F:oxidoreductase activity, acting on a sulfur group of donors, quinone or similar compound as acceptor"/>
    <property type="evidence" value="ECO:0007669"/>
    <property type="project" value="UniProtKB-UniRule"/>
</dbReference>
<dbReference type="GO" id="GO:0030091">
    <property type="term" value="P:protein repair"/>
    <property type="evidence" value="ECO:0007669"/>
    <property type="project" value="UniProtKB-UniRule"/>
</dbReference>
<dbReference type="Gene3D" id="3.90.420.10">
    <property type="entry name" value="Oxidoreductase, molybdopterin-binding domain"/>
    <property type="match status" value="1"/>
</dbReference>
<dbReference type="HAMAP" id="MF_01206">
    <property type="entry name" value="MsrP"/>
    <property type="match status" value="1"/>
</dbReference>
<dbReference type="InterPro" id="IPR022867">
    <property type="entry name" value="MsrP"/>
</dbReference>
<dbReference type="InterPro" id="IPR000572">
    <property type="entry name" value="OxRdtase_Mopterin-bd_dom"/>
</dbReference>
<dbReference type="InterPro" id="IPR036374">
    <property type="entry name" value="OxRdtase_Mopterin-bd_sf"/>
</dbReference>
<dbReference type="NCBIfam" id="NF003767">
    <property type="entry name" value="PRK05363.1"/>
    <property type="match status" value="1"/>
</dbReference>
<dbReference type="PANTHER" id="PTHR43032">
    <property type="entry name" value="PROTEIN-METHIONINE-SULFOXIDE REDUCTASE"/>
    <property type="match status" value="1"/>
</dbReference>
<dbReference type="PANTHER" id="PTHR43032:SF3">
    <property type="entry name" value="PROTEIN-METHIONINE-SULFOXIDE REDUCTASE CATALYTIC SUBUNIT MSRP"/>
    <property type="match status" value="1"/>
</dbReference>
<dbReference type="Pfam" id="PF00174">
    <property type="entry name" value="Oxidored_molyb"/>
    <property type="match status" value="1"/>
</dbReference>
<dbReference type="SUPFAM" id="SSF56524">
    <property type="entry name" value="Oxidoreductase molybdopterin-binding domain"/>
    <property type="match status" value="1"/>
</dbReference>
<organism>
    <name type="scientific">Pseudomonas aeruginosa (strain ATCC 15692 / DSM 22644 / CIP 104116 / JCM 14847 / LMG 12228 / 1C / PRS 101 / PAO1)</name>
    <dbReference type="NCBI Taxonomy" id="208964"/>
    <lineage>
        <taxon>Bacteria</taxon>
        <taxon>Pseudomonadati</taxon>
        <taxon>Pseudomonadota</taxon>
        <taxon>Gammaproteobacteria</taxon>
        <taxon>Pseudomonadales</taxon>
        <taxon>Pseudomonadaceae</taxon>
        <taxon>Pseudomonas</taxon>
    </lineage>
</organism>
<protein>
    <recommendedName>
        <fullName evidence="1">Protein-methionine-sulfoxide reductase catalytic subunit MsrP</fullName>
        <ecNumber evidence="1">1.8.5.-</ecNumber>
    </recommendedName>
</protein>
<reference key="1">
    <citation type="journal article" date="2000" name="Nature">
        <title>Complete genome sequence of Pseudomonas aeruginosa PAO1, an opportunistic pathogen.</title>
        <authorList>
            <person name="Stover C.K."/>
            <person name="Pham X.-Q.T."/>
            <person name="Erwin A.L."/>
            <person name="Mizoguchi S.D."/>
            <person name="Warrener P."/>
            <person name="Hickey M.J."/>
            <person name="Brinkman F.S.L."/>
            <person name="Hufnagle W.O."/>
            <person name="Kowalik D.J."/>
            <person name="Lagrou M."/>
            <person name="Garber R.L."/>
            <person name="Goltry L."/>
            <person name="Tolentino E."/>
            <person name="Westbrock-Wadman S."/>
            <person name="Yuan Y."/>
            <person name="Brody L.L."/>
            <person name="Coulter S.N."/>
            <person name="Folger K.R."/>
            <person name="Kas A."/>
            <person name="Larbig K."/>
            <person name="Lim R.M."/>
            <person name="Smith K.A."/>
            <person name="Spencer D.H."/>
            <person name="Wong G.K.-S."/>
            <person name="Wu Z."/>
            <person name="Paulsen I.T."/>
            <person name="Reizer J."/>
            <person name="Saier M.H. Jr."/>
            <person name="Hancock R.E.W."/>
            <person name="Lory S."/>
            <person name="Olson M.V."/>
        </authorList>
    </citation>
    <scope>NUCLEOTIDE SEQUENCE [LARGE SCALE GENOMIC DNA]</scope>
    <source>
        <strain>ATCC 15692 / DSM 22644 / CIP 104116 / JCM 14847 / LMG 12228 / 1C / PRS 101 / PAO1</strain>
    </source>
</reference>
<keyword id="KW-0479">Metal-binding</keyword>
<keyword id="KW-0500">Molybdenum</keyword>
<keyword id="KW-0560">Oxidoreductase</keyword>
<keyword id="KW-0574">Periplasm</keyword>
<keyword id="KW-1185">Reference proteome</keyword>
<keyword id="KW-0732">Signal</keyword>
<feature type="signal peptide" description="Tat-type signal" evidence="1">
    <location>
        <begin position="1"/>
        <end position="48"/>
    </location>
</feature>
<feature type="chain" id="PRO_0000070691" description="Protein-methionine-sulfoxide reductase catalytic subunit MsrP" evidence="1">
    <location>
        <begin position="49"/>
        <end position="337"/>
    </location>
</feature>
<feature type="binding site" evidence="1">
    <location>
        <position position="94"/>
    </location>
    <ligand>
        <name>Mo-molybdopterin</name>
        <dbReference type="ChEBI" id="CHEBI:71302"/>
    </ligand>
</feature>
<feature type="binding site" evidence="1">
    <location>
        <begin position="97"/>
        <end position="98"/>
    </location>
    <ligand>
        <name>Mo-molybdopterin</name>
        <dbReference type="ChEBI" id="CHEBI:71302"/>
    </ligand>
</feature>
<feature type="binding site" evidence="1">
    <location>
        <position position="152"/>
    </location>
    <ligand>
        <name>Mo-molybdopterin</name>
        <dbReference type="ChEBI" id="CHEBI:71302"/>
    </ligand>
    <ligandPart>
        <name>Mo</name>
        <dbReference type="ChEBI" id="CHEBI:28685"/>
    </ligandPart>
</feature>
<feature type="binding site" evidence="1">
    <location>
        <position position="187"/>
    </location>
    <ligand>
        <name>Mo-molybdopterin</name>
        <dbReference type="ChEBI" id="CHEBI:71302"/>
    </ligand>
</feature>
<feature type="binding site" evidence="1">
    <location>
        <position position="237"/>
    </location>
    <ligand>
        <name>Mo-molybdopterin</name>
        <dbReference type="ChEBI" id="CHEBI:71302"/>
    </ligand>
</feature>
<feature type="binding site" evidence="1">
    <location>
        <position position="242"/>
    </location>
    <ligand>
        <name>Mo-molybdopterin</name>
        <dbReference type="ChEBI" id="CHEBI:71302"/>
    </ligand>
</feature>
<feature type="binding site" evidence="1">
    <location>
        <begin position="253"/>
        <end position="255"/>
    </location>
    <ligand>
        <name>Mo-molybdopterin</name>
        <dbReference type="ChEBI" id="CHEBI:71302"/>
    </ligand>
</feature>
<evidence type="ECO:0000255" key="1">
    <source>
        <dbReference type="HAMAP-Rule" id="MF_01206"/>
    </source>
</evidence>
<sequence length="337" mass="38144">MLIKIPSRSDCSESEVTSETLYLSRRRLLGASFAGLALASGLPRLGFADEQRYAGVESVPAPGWFAEKLPQTRWQAVNVQGEAITPFKDATHYNNFYEFGPNKGDPAENASALKAEPWSVVIDGEVGKPGTYALEDFVKPYQLEERIYRLRCVEAWSMVIPWLGFPLADLLKRVEPNGQAKFVRFETLQRPEQMVGQRSGFSVIDWPYMEGLRMDEAMHPLAILAVGMYGRLLPNQNGAPLRLVVPWKYGFKSIKSIVRISLVREQPKTTWESIAANEYGFYANVNPQVDHPRWSQARERRLPSGLFSPNVRDTQMFNGYGSEVASLYSGMDLRKYY</sequence>
<name>MSRP_PSEAE</name>
<gene>
    <name evidence="1" type="primary">msrP</name>
    <name type="ordered locus">PA4692</name>
</gene>
<proteinExistence type="inferred from homology"/>
<comment type="function">
    <text evidence="1">Part of the MsrPQ system that repairs oxidized periplasmic proteins containing methionine sulfoxide residues (Met-O), using respiratory chain electrons. Thus protects these proteins from oxidative-stress damage caused by reactive species of oxygen and chlorine generated by the host defense mechanisms. MsrPQ is essential for the maintenance of envelope integrity under bleach stress, rescuing a wide series of structurally unrelated periplasmic proteins from methionine oxidation. The catalytic subunit MsrP is non-stereospecific, being able to reduce both (R-) and (S-) diastereoisomers of methionine sulfoxide.</text>
</comment>
<comment type="catalytic activity">
    <reaction evidence="1">
        <text>L-methionyl-[protein] + a quinone + H2O = L-methionyl-(S)-S-oxide-[protein] + a quinol</text>
        <dbReference type="Rhea" id="RHEA:51292"/>
        <dbReference type="Rhea" id="RHEA-COMP:12313"/>
        <dbReference type="Rhea" id="RHEA-COMP:12315"/>
        <dbReference type="ChEBI" id="CHEBI:15377"/>
        <dbReference type="ChEBI" id="CHEBI:16044"/>
        <dbReference type="ChEBI" id="CHEBI:24646"/>
        <dbReference type="ChEBI" id="CHEBI:44120"/>
        <dbReference type="ChEBI" id="CHEBI:132124"/>
    </reaction>
</comment>
<comment type="catalytic activity">
    <reaction evidence="1">
        <text>L-methionyl-[protein] + a quinone + H2O = L-methionyl-(R)-S-oxide-[protein] + a quinol</text>
        <dbReference type="Rhea" id="RHEA:51296"/>
        <dbReference type="Rhea" id="RHEA-COMP:12313"/>
        <dbReference type="Rhea" id="RHEA-COMP:12314"/>
        <dbReference type="ChEBI" id="CHEBI:15377"/>
        <dbReference type="ChEBI" id="CHEBI:16044"/>
        <dbReference type="ChEBI" id="CHEBI:24646"/>
        <dbReference type="ChEBI" id="CHEBI:45764"/>
        <dbReference type="ChEBI" id="CHEBI:132124"/>
    </reaction>
</comment>
<comment type="cofactor">
    <cofactor evidence="1">
        <name>Mo-molybdopterin</name>
        <dbReference type="ChEBI" id="CHEBI:71302"/>
    </cofactor>
    <text evidence="1">Binds 1 Mo-molybdopterin (Mo-MPT) cofactor per subunit.</text>
</comment>
<comment type="subunit">
    <text evidence="1">Heterodimer of a catalytic subunit (MsrP) and a heme-binding subunit (MsrQ).</text>
</comment>
<comment type="subcellular location">
    <subcellularLocation>
        <location evidence="1">Periplasm</location>
    </subcellularLocation>
    <text evidence="1">Is attached to the inner membrane when interacting with the MsrQ subunit.</text>
</comment>
<comment type="PTM">
    <text evidence="1">Predicted to be exported by the Tat system. The position of the signal peptide cleavage has not been experimentally proven.</text>
</comment>
<comment type="similarity">
    <text evidence="1">Belongs to the MsrP family.</text>
</comment>